<sequence length="527" mass="59883">MADNRDPASDQMKHWKEQRAAQKPDILTTGSGNPIGDKLNILTAGPRGPLLVQDVVFTDEMAHFDRERIPERVVHAKGAGAFGYFEVTHDITRFSKAKVFEHVGKRTPIAVRFSTVAGESGSADTVRDPRGFAVKFYTEDGNWDLVGNNTPIFFIRDAILFPSFIHSQKRNPQTHLKDPDMVWDFWSLRPESLHQVSFLFSDRGIPDGHRHMNGYGSHTFKLVNEKGEAVYCKFHYKTDQGIKNLSVEDAARLPQEDPDYGIRDLFNAIATGNYPSWTFYIQVMTFQEAEAFPFNPFDLTKVWPHSEYPLIPVGKLVLNRNPVNYFAEVEQMAFDPSNMPPGIEPSPDKMLQGRLFGYPDTHRHRLGANYLQIPVNCPFRARVANYQRDGPMCFQDNQGGAPNYYPNSFSAPEQTHSALEHCTRYSGDVQRFNSANEDNVTQVRTFYLNVLNEEERKRLCENIAGHLKDAQLFIQKKAVKNFSDVHPDYGARIQALLDKYNAEXPENAVHTYVQAGSHLAAREKANL</sequence>
<accession>O62839</accession>
<accession>Q9TR38</accession>
<accession>Q9TR39</accession>
<dbReference type="EC" id="1.11.1.6" evidence="3"/>
<dbReference type="EMBL" id="D89812">
    <property type="protein sequence ID" value="BAA25301.1"/>
    <property type="status" value="ALT_FRAME"/>
    <property type="molecule type" value="mRNA"/>
</dbReference>
<dbReference type="RefSeq" id="NP_999466.2">
    <property type="nucleotide sequence ID" value="NM_214301.2"/>
</dbReference>
<dbReference type="FunCoup" id="O62839">
    <property type="interactions" value="801"/>
</dbReference>
<dbReference type="STRING" id="9823.ENSSSCP00000014135"/>
<dbReference type="PeroxiBase" id="5272">
    <property type="entry name" value="SscKat01"/>
</dbReference>
<dbReference type="PaxDb" id="9823-ENSSSCP00000014135"/>
<dbReference type="PeptideAtlas" id="O62839"/>
<dbReference type="GeneID" id="397568"/>
<dbReference type="KEGG" id="ssc:397568"/>
<dbReference type="CTD" id="847"/>
<dbReference type="eggNOG" id="KOG0047">
    <property type="taxonomic scope" value="Eukaryota"/>
</dbReference>
<dbReference type="InParanoid" id="O62839"/>
<dbReference type="OrthoDB" id="6880011at2759"/>
<dbReference type="Proteomes" id="UP000008227">
    <property type="component" value="Unplaced"/>
</dbReference>
<dbReference type="Proteomes" id="UP000314985">
    <property type="component" value="Unplaced"/>
</dbReference>
<dbReference type="Proteomes" id="UP000694570">
    <property type="component" value="Unplaced"/>
</dbReference>
<dbReference type="Proteomes" id="UP000694571">
    <property type="component" value="Unplaced"/>
</dbReference>
<dbReference type="Proteomes" id="UP000694720">
    <property type="component" value="Unplaced"/>
</dbReference>
<dbReference type="Proteomes" id="UP000694722">
    <property type="component" value="Unplaced"/>
</dbReference>
<dbReference type="Proteomes" id="UP000694723">
    <property type="component" value="Unplaced"/>
</dbReference>
<dbReference type="Proteomes" id="UP000694724">
    <property type="component" value="Unplaced"/>
</dbReference>
<dbReference type="Proteomes" id="UP000694725">
    <property type="component" value="Unplaced"/>
</dbReference>
<dbReference type="Proteomes" id="UP000694726">
    <property type="component" value="Unplaced"/>
</dbReference>
<dbReference type="Proteomes" id="UP000694727">
    <property type="component" value="Unplaced"/>
</dbReference>
<dbReference type="Proteomes" id="UP000694728">
    <property type="component" value="Unplaced"/>
</dbReference>
<dbReference type="GO" id="GO:0005737">
    <property type="term" value="C:cytoplasm"/>
    <property type="evidence" value="ECO:0000318"/>
    <property type="project" value="GO_Central"/>
</dbReference>
<dbReference type="GO" id="GO:0005739">
    <property type="term" value="C:mitochondrion"/>
    <property type="evidence" value="ECO:0000318"/>
    <property type="project" value="GO_Central"/>
</dbReference>
<dbReference type="GO" id="GO:0005782">
    <property type="term" value="C:peroxisomal matrix"/>
    <property type="evidence" value="ECO:0007669"/>
    <property type="project" value="UniProtKB-SubCell"/>
</dbReference>
<dbReference type="GO" id="GO:0005777">
    <property type="term" value="C:peroxisome"/>
    <property type="evidence" value="ECO:0000318"/>
    <property type="project" value="GO_Central"/>
</dbReference>
<dbReference type="GO" id="GO:0004096">
    <property type="term" value="F:catalase activity"/>
    <property type="evidence" value="ECO:0000318"/>
    <property type="project" value="GO_Central"/>
</dbReference>
<dbReference type="GO" id="GO:0020037">
    <property type="term" value="F:heme binding"/>
    <property type="evidence" value="ECO:0000318"/>
    <property type="project" value="GO_Central"/>
</dbReference>
<dbReference type="GO" id="GO:0046872">
    <property type="term" value="F:metal ion binding"/>
    <property type="evidence" value="ECO:0007669"/>
    <property type="project" value="UniProtKB-KW"/>
</dbReference>
<dbReference type="GO" id="GO:0042744">
    <property type="term" value="P:hydrogen peroxide catabolic process"/>
    <property type="evidence" value="ECO:0000318"/>
    <property type="project" value="GO_Central"/>
</dbReference>
<dbReference type="GO" id="GO:0051781">
    <property type="term" value="P:positive regulation of cell division"/>
    <property type="evidence" value="ECO:0007669"/>
    <property type="project" value="UniProtKB-KW"/>
</dbReference>
<dbReference type="GO" id="GO:0042542">
    <property type="term" value="P:response to hydrogen peroxide"/>
    <property type="evidence" value="ECO:0000318"/>
    <property type="project" value="GO_Central"/>
</dbReference>
<dbReference type="CDD" id="cd08156">
    <property type="entry name" value="catalase_clade_3"/>
    <property type="match status" value="1"/>
</dbReference>
<dbReference type="FunFam" id="2.40.180.10:FF:000001">
    <property type="entry name" value="Catalase"/>
    <property type="match status" value="1"/>
</dbReference>
<dbReference type="Gene3D" id="2.40.180.10">
    <property type="entry name" value="Catalase core domain"/>
    <property type="match status" value="1"/>
</dbReference>
<dbReference type="InterPro" id="IPR018028">
    <property type="entry name" value="Catalase"/>
</dbReference>
<dbReference type="InterPro" id="IPR040333">
    <property type="entry name" value="Catalase_3"/>
</dbReference>
<dbReference type="InterPro" id="IPR024708">
    <property type="entry name" value="Catalase_AS"/>
</dbReference>
<dbReference type="InterPro" id="IPR024711">
    <property type="entry name" value="Catalase_clade1/3"/>
</dbReference>
<dbReference type="InterPro" id="IPR011614">
    <property type="entry name" value="Catalase_core"/>
</dbReference>
<dbReference type="InterPro" id="IPR002226">
    <property type="entry name" value="Catalase_haem_BS"/>
</dbReference>
<dbReference type="InterPro" id="IPR010582">
    <property type="entry name" value="Catalase_immune_responsive"/>
</dbReference>
<dbReference type="InterPro" id="IPR020835">
    <property type="entry name" value="Catalase_sf"/>
</dbReference>
<dbReference type="PANTHER" id="PTHR11465">
    <property type="entry name" value="CATALASE"/>
    <property type="match status" value="1"/>
</dbReference>
<dbReference type="PANTHER" id="PTHR11465:SF9">
    <property type="entry name" value="CATALASE"/>
    <property type="match status" value="1"/>
</dbReference>
<dbReference type="Pfam" id="PF00199">
    <property type="entry name" value="Catalase"/>
    <property type="match status" value="1"/>
</dbReference>
<dbReference type="Pfam" id="PF06628">
    <property type="entry name" value="Catalase-rel"/>
    <property type="match status" value="1"/>
</dbReference>
<dbReference type="PIRSF" id="PIRSF038928">
    <property type="entry name" value="Catalase_clade1-3"/>
    <property type="match status" value="1"/>
</dbReference>
<dbReference type="PRINTS" id="PR00067">
    <property type="entry name" value="CATALASE"/>
</dbReference>
<dbReference type="SMART" id="SM01060">
    <property type="entry name" value="Catalase"/>
    <property type="match status" value="1"/>
</dbReference>
<dbReference type="SUPFAM" id="SSF56634">
    <property type="entry name" value="Heme-dependent catalase-like"/>
    <property type="match status" value="1"/>
</dbReference>
<dbReference type="PROSITE" id="PS00437">
    <property type="entry name" value="CATALASE_1"/>
    <property type="match status" value="1"/>
</dbReference>
<dbReference type="PROSITE" id="PS00438">
    <property type="entry name" value="CATALASE_2"/>
    <property type="match status" value="1"/>
</dbReference>
<dbReference type="PROSITE" id="PS51402">
    <property type="entry name" value="CATALASE_3"/>
    <property type="match status" value="1"/>
</dbReference>
<name>CATA_PIG</name>
<proteinExistence type="evidence at protein level"/>
<comment type="function">
    <text evidence="1">Catalyzes the degradation of hydrogen peroxide (H(2)O(2)) generated by peroxisomal oxidases to water and oxygen, thereby protecting cells from the toxic effects of hydrogen peroxide. Promotes growth of cells including T-cells, B-cells, myeloid leukemia cells, melanoma cells, mastocytoma cells and normal and transformed fibroblast cells.</text>
</comment>
<comment type="catalytic activity">
    <reaction evidence="3">
        <text>2 H2O2 = O2 + 2 H2O</text>
        <dbReference type="Rhea" id="RHEA:20309"/>
        <dbReference type="ChEBI" id="CHEBI:15377"/>
        <dbReference type="ChEBI" id="CHEBI:15379"/>
        <dbReference type="ChEBI" id="CHEBI:16240"/>
        <dbReference type="EC" id="1.11.1.6"/>
    </reaction>
</comment>
<comment type="cofactor">
    <cofactor evidence="1">
        <name>heme</name>
        <dbReference type="ChEBI" id="CHEBI:30413"/>
    </cofactor>
</comment>
<comment type="cofactor">
    <cofactor evidence="1">
        <name>NADP(+)</name>
        <dbReference type="ChEBI" id="CHEBI:58349"/>
    </cofactor>
</comment>
<comment type="subunit">
    <text evidence="1">Homotetramer. Interacts (via microbody targeting signal) with PEX5, monomeric form interacts with PEX5, leading to its translocation into peroxisomes.</text>
</comment>
<comment type="subcellular location">
    <subcellularLocation>
        <location evidence="1">Peroxisome matrix</location>
    </subcellularLocation>
</comment>
<comment type="similarity">
    <text evidence="5">Belongs to the catalase family.</text>
</comment>
<comment type="sequence caution" evidence="5">
    <conflict type="frameshift">
        <sequence resource="EMBL-CDS" id="BAA25301"/>
    </conflict>
</comment>
<keyword id="KW-0007">Acetylation</keyword>
<keyword id="KW-0903">Direct protein sequencing</keyword>
<keyword id="KW-0349">Heme</keyword>
<keyword id="KW-0376">Hydrogen peroxide</keyword>
<keyword id="KW-0408">Iron</keyword>
<keyword id="KW-0479">Metal-binding</keyword>
<keyword id="KW-0497">Mitogen</keyword>
<keyword id="KW-0521">NADP</keyword>
<keyword id="KW-0560">Oxidoreductase</keyword>
<keyword id="KW-0575">Peroxidase</keyword>
<keyword id="KW-0576">Peroxisome</keyword>
<keyword id="KW-0597">Phosphoprotein</keyword>
<keyword id="KW-1185">Reference proteome</keyword>
<gene>
    <name type="primary">CAT</name>
</gene>
<protein>
    <recommendedName>
        <fullName>Catalase</fullName>
        <ecNumber evidence="3">1.11.1.6</ecNumber>
    </recommendedName>
</protein>
<reference key="1">
    <citation type="journal article" date="1997" name="Biochem. Genet.">
        <title>Swine catalase deduced from cDNA and localization of the catalase gene on swine chromosome 2p16-p15.</title>
        <authorList>
            <person name="Lin Z.-H."/>
            <person name="Wang Y.-F."/>
            <person name="Sarai A."/>
            <person name="Yasue H."/>
        </authorList>
    </citation>
    <scope>NUCLEOTIDE SEQUENCE [MRNA]</scope>
    <source>
        <strain>Landrace</strain>
        <tissue>Liver</tissue>
    </source>
</reference>
<reference key="2">
    <citation type="journal article" date="1995" name="J. Biol. Chem.">
        <title>Porcine submaxillary gland GDP-L-fucose: beta-D-galactoside alpha-2-L-fucosyltransferase is likely a counterpart of the human Secretor gene-encoded blood group transferase.</title>
        <authorList>
            <person name="Thurin J."/>
            <person name="Blaszczyk-Thurin M."/>
        </authorList>
    </citation>
    <scope>PROTEIN SEQUENCE OF 20-38 AND 321-349</scope>
    <source>
        <tissue>Submandibular gland</tissue>
    </source>
</reference>
<evidence type="ECO:0000250" key="1">
    <source>
        <dbReference type="UniProtKB" id="P04040"/>
    </source>
</evidence>
<evidence type="ECO:0000250" key="2">
    <source>
        <dbReference type="UniProtKB" id="P24270"/>
    </source>
</evidence>
<evidence type="ECO:0000255" key="3">
    <source>
        <dbReference type="PROSITE-ProRule" id="PRU10013"/>
    </source>
</evidence>
<evidence type="ECO:0000256" key="4">
    <source>
        <dbReference type="SAM" id="MobiDB-lite"/>
    </source>
</evidence>
<evidence type="ECO:0000305" key="5"/>
<organism>
    <name type="scientific">Sus scrofa</name>
    <name type="common">Pig</name>
    <dbReference type="NCBI Taxonomy" id="9823"/>
    <lineage>
        <taxon>Eukaryota</taxon>
        <taxon>Metazoa</taxon>
        <taxon>Chordata</taxon>
        <taxon>Craniata</taxon>
        <taxon>Vertebrata</taxon>
        <taxon>Euteleostomi</taxon>
        <taxon>Mammalia</taxon>
        <taxon>Eutheria</taxon>
        <taxon>Laurasiatheria</taxon>
        <taxon>Artiodactyla</taxon>
        <taxon>Suina</taxon>
        <taxon>Suidae</taxon>
        <taxon>Sus</taxon>
    </lineage>
</organism>
<feature type="initiator methionine" description="Removed" evidence="1">
    <location>
        <position position="1"/>
    </location>
</feature>
<feature type="chain" id="PRO_0000084903" description="Catalase">
    <location>
        <begin position="2"/>
        <end position="527"/>
    </location>
</feature>
<feature type="region of interest" description="Disordered" evidence="4">
    <location>
        <begin position="1"/>
        <end position="32"/>
    </location>
</feature>
<feature type="short sequence motif" description="Microbody targeting signal; atypical" evidence="1">
    <location>
        <begin position="524"/>
        <end position="527"/>
    </location>
</feature>
<feature type="compositionally biased region" description="Basic and acidic residues" evidence="4">
    <location>
        <begin position="1"/>
        <end position="22"/>
    </location>
</feature>
<feature type="active site" evidence="3">
    <location>
        <position position="75"/>
    </location>
</feature>
<feature type="active site" evidence="3">
    <location>
        <position position="148"/>
    </location>
</feature>
<feature type="binding site" evidence="1">
    <location>
        <position position="194"/>
    </location>
    <ligand>
        <name>NADP(+)</name>
        <dbReference type="ChEBI" id="CHEBI:58349"/>
    </ligand>
</feature>
<feature type="binding site" evidence="1">
    <location>
        <position position="201"/>
    </location>
    <ligand>
        <name>NADP(+)</name>
        <dbReference type="ChEBI" id="CHEBI:58349"/>
    </ligand>
</feature>
<feature type="binding site" evidence="1">
    <location>
        <position position="203"/>
    </location>
    <ligand>
        <name>NADP(+)</name>
        <dbReference type="ChEBI" id="CHEBI:58349"/>
    </ligand>
</feature>
<feature type="binding site" evidence="1">
    <location>
        <position position="213"/>
    </location>
    <ligand>
        <name>NADP(+)</name>
        <dbReference type="ChEBI" id="CHEBI:58349"/>
    </ligand>
</feature>
<feature type="binding site" evidence="1">
    <location>
        <position position="237"/>
    </location>
    <ligand>
        <name>NADP(+)</name>
        <dbReference type="ChEBI" id="CHEBI:58349"/>
    </ligand>
</feature>
<feature type="binding site" evidence="1">
    <location>
        <position position="303"/>
    </location>
    <ligand>
        <name>NADP(+)</name>
        <dbReference type="ChEBI" id="CHEBI:58349"/>
    </ligand>
</feature>
<feature type="binding site" evidence="1">
    <location>
        <position position="305"/>
    </location>
    <ligand>
        <name>NADP(+)</name>
        <dbReference type="ChEBI" id="CHEBI:58349"/>
    </ligand>
</feature>
<feature type="binding site" description="axial binding residue" evidence="1">
    <location>
        <position position="358"/>
    </location>
    <ligand>
        <name>heme</name>
        <dbReference type="ChEBI" id="CHEBI:30413"/>
    </ligand>
    <ligandPart>
        <name>Fe</name>
        <dbReference type="ChEBI" id="CHEBI:18248"/>
    </ligandPart>
</feature>
<feature type="modified residue" description="N-acetylalanine" evidence="1">
    <location>
        <position position="2"/>
    </location>
</feature>
<feature type="modified residue" description="Phosphoserine" evidence="1">
    <location>
        <position position="9"/>
    </location>
</feature>
<feature type="modified residue" description="N6-succinyllysine" evidence="2">
    <location>
        <position position="13"/>
    </location>
</feature>
<feature type="modified residue" description="N6-succinyllysine" evidence="2">
    <location>
        <position position="221"/>
    </location>
</feature>
<feature type="modified residue" description="N6-acetyllysine" evidence="2">
    <location>
        <position position="233"/>
    </location>
</feature>
<feature type="modified residue" description="Phosphoserine" evidence="2">
    <location>
        <position position="417"/>
    </location>
</feature>
<feature type="modified residue" description="Phosphoserine" evidence="2">
    <location>
        <position position="434"/>
    </location>
</feature>
<feature type="modified residue" description="N6-acetyllysine; alternate" evidence="2">
    <location>
        <position position="480"/>
    </location>
</feature>
<feature type="modified residue" description="N6-succinyllysine; alternate" evidence="2">
    <location>
        <position position="480"/>
    </location>
</feature>
<feature type="modified residue" description="N6-acetyllysine" evidence="2">
    <location>
        <position position="499"/>
    </location>
</feature>
<feature type="modified residue" description="Phosphothreonine" evidence="1">
    <location>
        <position position="511"/>
    </location>
</feature>
<feature type="modified residue" description="Phosphoserine" evidence="1">
    <location>
        <position position="517"/>
    </location>
</feature>